<sequence length="487" mass="53204">MASATDTVSAGSTPRDKVVTRFAPSPTGFLHIGGARTALFNWLYARHHGGTYLLRIEDTDRARSTDAAIDAIFDGLEWLGLGGDEPAVFQFARSDRHAEVAHKLLEAGHAYRCYLTQEELAARRELAQAERRPFRIDSEWRDATPDQWPADQSYVVRMKAPREGETTIVDKVQGSITVQNSELDDFIILRSDGTPTYMLAVVVDDHDMGVTHVIRGDDHINNAFRQLVIIRGMHAIEGGWPDPVYAHIPLIHGADGAKLSKRHGALGVDAYRDEMGLLPEAVFNYLLRLGWGHGDEEIISREQAVAWFDIGDVNKGASRFDLKKLLNLNGHYIREADDARLAALVAPRLATLAPGFAPDKGLDLLTRAMPVLKVRAADINELAAGSVFLFAQRPLAMAEKAASLLTDDARAILTKVAGVLEAENVWTTGVLEATVKQMAEELGIGLGKIAQPLRASLTGQTTSPGIFDVLALLGKDESLSRIRDQAA</sequence>
<proteinExistence type="inferred from homology"/>
<dbReference type="EC" id="6.1.1.17" evidence="1"/>
<dbReference type="EMBL" id="CP000248">
    <property type="protein sequence ID" value="ABD26470.1"/>
    <property type="molecule type" value="Genomic_DNA"/>
</dbReference>
<dbReference type="RefSeq" id="WP_011445679.1">
    <property type="nucleotide sequence ID" value="NC_007794.1"/>
</dbReference>
<dbReference type="SMR" id="Q2G6Q3"/>
<dbReference type="STRING" id="279238.Saro_2031"/>
<dbReference type="KEGG" id="nar:Saro_2031"/>
<dbReference type="eggNOG" id="COG0008">
    <property type="taxonomic scope" value="Bacteria"/>
</dbReference>
<dbReference type="HOGENOM" id="CLU_015768_6_0_5"/>
<dbReference type="Proteomes" id="UP000009134">
    <property type="component" value="Chromosome"/>
</dbReference>
<dbReference type="GO" id="GO:0005829">
    <property type="term" value="C:cytosol"/>
    <property type="evidence" value="ECO:0007669"/>
    <property type="project" value="TreeGrafter"/>
</dbReference>
<dbReference type="GO" id="GO:0005524">
    <property type="term" value="F:ATP binding"/>
    <property type="evidence" value="ECO:0007669"/>
    <property type="project" value="UniProtKB-UniRule"/>
</dbReference>
<dbReference type="GO" id="GO:0004818">
    <property type="term" value="F:glutamate-tRNA ligase activity"/>
    <property type="evidence" value="ECO:0007669"/>
    <property type="project" value="UniProtKB-UniRule"/>
</dbReference>
<dbReference type="GO" id="GO:0000049">
    <property type="term" value="F:tRNA binding"/>
    <property type="evidence" value="ECO:0007669"/>
    <property type="project" value="InterPro"/>
</dbReference>
<dbReference type="GO" id="GO:0008270">
    <property type="term" value="F:zinc ion binding"/>
    <property type="evidence" value="ECO:0007669"/>
    <property type="project" value="InterPro"/>
</dbReference>
<dbReference type="GO" id="GO:0006424">
    <property type="term" value="P:glutamyl-tRNA aminoacylation"/>
    <property type="evidence" value="ECO:0007669"/>
    <property type="project" value="UniProtKB-UniRule"/>
</dbReference>
<dbReference type="CDD" id="cd00808">
    <property type="entry name" value="GluRS_core"/>
    <property type="match status" value="1"/>
</dbReference>
<dbReference type="FunFam" id="3.40.50.620:FF:000007">
    <property type="entry name" value="Glutamate--tRNA ligase"/>
    <property type="match status" value="1"/>
</dbReference>
<dbReference type="Gene3D" id="1.10.10.350">
    <property type="match status" value="1"/>
</dbReference>
<dbReference type="Gene3D" id="3.40.50.620">
    <property type="entry name" value="HUPs"/>
    <property type="match status" value="1"/>
</dbReference>
<dbReference type="HAMAP" id="MF_00022">
    <property type="entry name" value="Glu_tRNA_synth_type1"/>
    <property type="match status" value="1"/>
</dbReference>
<dbReference type="InterPro" id="IPR045462">
    <property type="entry name" value="aa-tRNA-synth_I_cd-bd"/>
</dbReference>
<dbReference type="InterPro" id="IPR020751">
    <property type="entry name" value="aa-tRNA-synth_I_codon-bd_sub2"/>
</dbReference>
<dbReference type="InterPro" id="IPR001412">
    <property type="entry name" value="aa-tRNA-synth_I_CS"/>
</dbReference>
<dbReference type="InterPro" id="IPR008925">
    <property type="entry name" value="aa_tRNA-synth_I_cd-bd_sf"/>
</dbReference>
<dbReference type="InterPro" id="IPR004527">
    <property type="entry name" value="Glu-tRNA-ligase_bac/mito"/>
</dbReference>
<dbReference type="InterPro" id="IPR000924">
    <property type="entry name" value="Glu/Gln-tRNA-synth"/>
</dbReference>
<dbReference type="InterPro" id="IPR020058">
    <property type="entry name" value="Glu/Gln-tRNA-synth_Ib_cat-dom"/>
</dbReference>
<dbReference type="InterPro" id="IPR049940">
    <property type="entry name" value="GluQ/Sye"/>
</dbReference>
<dbReference type="InterPro" id="IPR033910">
    <property type="entry name" value="GluRS_core"/>
</dbReference>
<dbReference type="InterPro" id="IPR014729">
    <property type="entry name" value="Rossmann-like_a/b/a_fold"/>
</dbReference>
<dbReference type="NCBIfam" id="TIGR00464">
    <property type="entry name" value="gltX_bact"/>
    <property type="match status" value="1"/>
</dbReference>
<dbReference type="PANTHER" id="PTHR43311">
    <property type="entry name" value="GLUTAMATE--TRNA LIGASE"/>
    <property type="match status" value="1"/>
</dbReference>
<dbReference type="PANTHER" id="PTHR43311:SF2">
    <property type="entry name" value="GLUTAMATE--TRNA LIGASE, MITOCHONDRIAL-RELATED"/>
    <property type="match status" value="1"/>
</dbReference>
<dbReference type="Pfam" id="PF19269">
    <property type="entry name" value="Anticodon_2"/>
    <property type="match status" value="1"/>
</dbReference>
<dbReference type="Pfam" id="PF00749">
    <property type="entry name" value="tRNA-synt_1c"/>
    <property type="match status" value="1"/>
</dbReference>
<dbReference type="PRINTS" id="PR00987">
    <property type="entry name" value="TRNASYNTHGLU"/>
</dbReference>
<dbReference type="SUPFAM" id="SSF48163">
    <property type="entry name" value="An anticodon-binding domain of class I aminoacyl-tRNA synthetases"/>
    <property type="match status" value="1"/>
</dbReference>
<dbReference type="SUPFAM" id="SSF52374">
    <property type="entry name" value="Nucleotidylyl transferase"/>
    <property type="match status" value="1"/>
</dbReference>
<dbReference type="PROSITE" id="PS00178">
    <property type="entry name" value="AA_TRNA_LIGASE_I"/>
    <property type="match status" value="1"/>
</dbReference>
<evidence type="ECO:0000255" key="1">
    <source>
        <dbReference type="HAMAP-Rule" id="MF_00022"/>
    </source>
</evidence>
<reference key="1">
    <citation type="submission" date="2006-01" db="EMBL/GenBank/DDBJ databases">
        <title>Complete sequence of Novosphingobium aromaticivorans DSM 12444.</title>
        <authorList>
            <consortium name="US DOE Joint Genome Institute"/>
            <person name="Copeland A."/>
            <person name="Lucas S."/>
            <person name="Lapidus A."/>
            <person name="Barry K."/>
            <person name="Detter J.C."/>
            <person name="Glavina T."/>
            <person name="Hammon N."/>
            <person name="Israni S."/>
            <person name="Pitluck S."/>
            <person name="Chain P."/>
            <person name="Malfatti S."/>
            <person name="Shin M."/>
            <person name="Vergez L."/>
            <person name="Schmutz J."/>
            <person name="Larimer F."/>
            <person name="Land M."/>
            <person name="Kyrpides N."/>
            <person name="Ivanova N."/>
            <person name="Fredrickson J."/>
            <person name="Balkwill D."/>
            <person name="Romine M.F."/>
            <person name="Richardson P."/>
        </authorList>
    </citation>
    <scope>NUCLEOTIDE SEQUENCE [LARGE SCALE GENOMIC DNA]</scope>
    <source>
        <strain>ATCC 700278 / DSM 12444 / CCUG 56034 / CIP 105152 / NBRC 16084 / F199</strain>
    </source>
</reference>
<name>SYE2_NOVAD</name>
<accession>Q2G6Q3</accession>
<organism>
    <name type="scientific">Novosphingobium aromaticivorans (strain ATCC 700278 / DSM 12444 / CCUG 56034 / CIP 105152 / NBRC 16084 / F199)</name>
    <dbReference type="NCBI Taxonomy" id="279238"/>
    <lineage>
        <taxon>Bacteria</taxon>
        <taxon>Pseudomonadati</taxon>
        <taxon>Pseudomonadota</taxon>
        <taxon>Alphaproteobacteria</taxon>
        <taxon>Sphingomonadales</taxon>
        <taxon>Sphingomonadaceae</taxon>
        <taxon>Novosphingobium</taxon>
    </lineage>
</organism>
<feature type="chain" id="PRO_0000237381" description="Glutamate--tRNA ligase 2">
    <location>
        <begin position="1"/>
        <end position="487"/>
    </location>
</feature>
<feature type="short sequence motif" description="'HIGH' region" evidence="1">
    <location>
        <begin position="24"/>
        <end position="34"/>
    </location>
</feature>
<feature type="short sequence motif" description="'KMSKS' region" evidence="1">
    <location>
        <begin position="258"/>
        <end position="262"/>
    </location>
</feature>
<feature type="binding site" evidence="1">
    <location>
        <position position="261"/>
    </location>
    <ligand>
        <name>ATP</name>
        <dbReference type="ChEBI" id="CHEBI:30616"/>
    </ligand>
</feature>
<comment type="function">
    <text evidence="1">Catalyzes the attachment of glutamate to tRNA(Glu) in a two-step reaction: glutamate is first activated by ATP to form Glu-AMP and then transferred to the acceptor end of tRNA(Glu).</text>
</comment>
<comment type="catalytic activity">
    <reaction evidence="1">
        <text>tRNA(Glu) + L-glutamate + ATP = L-glutamyl-tRNA(Glu) + AMP + diphosphate</text>
        <dbReference type="Rhea" id="RHEA:23540"/>
        <dbReference type="Rhea" id="RHEA-COMP:9663"/>
        <dbReference type="Rhea" id="RHEA-COMP:9680"/>
        <dbReference type="ChEBI" id="CHEBI:29985"/>
        <dbReference type="ChEBI" id="CHEBI:30616"/>
        <dbReference type="ChEBI" id="CHEBI:33019"/>
        <dbReference type="ChEBI" id="CHEBI:78442"/>
        <dbReference type="ChEBI" id="CHEBI:78520"/>
        <dbReference type="ChEBI" id="CHEBI:456215"/>
        <dbReference type="EC" id="6.1.1.17"/>
    </reaction>
</comment>
<comment type="subunit">
    <text evidence="1">Monomer.</text>
</comment>
<comment type="subcellular location">
    <subcellularLocation>
        <location evidence="1">Cytoplasm</location>
    </subcellularLocation>
</comment>
<comment type="similarity">
    <text evidence="1">Belongs to the class-I aminoacyl-tRNA synthetase family. Glutamate--tRNA ligase type 1 subfamily.</text>
</comment>
<keyword id="KW-0030">Aminoacyl-tRNA synthetase</keyword>
<keyword id="KW-0067">ATP-binding</keyword>
<keyword id="KW-0963">Cytoplasm</keyword>
<keyword id="KW-0436">Ligase</keyword>
<keyword id="KW-0547">Nucleotide-binding</keyword>
<keyword id="KW-0648">Protein biosynthesis</keyword>
<keyword id="KW-1185">Reference proteome</keyword>
<gene>
    <name evidence="1" type="primary">gltX2</name>
    <name type="ordered locus">Saro_2031</name>
</gene>
<protein>
    <recommendedName>
        <fullName evidence="1">Glutamate--tRNA ligase 2</fullName>
        <ecNumber evidence="1">6.1.1.17</ecNumber>
    </recommendedName>
    <alternativeName>
        <fullName evidence="1">Glutamyl-tRNA synthetase 2</fullName>
        <shortName evidence="1">GluRS 2</shortName>
    </alternativeName>
</protein>